<dbReference type="EC" id="6.1.1.1" evidence="1"/>
<dbReference type="EMBL" id="CP000822">
    <property type="protein sequence ID" value="ABV12781.1"/>
    <property type="molecule type" value="Genomic_DNA"/>
</dbReference>
<dbReference type="SMR" id="A8AH18"/>
<dbReference type="STRING" id="290338.CKO_01649"/>
<dbReference type="KEGG" id="cko:CKO_01649"/>
<dbReference type="HOGENOM" id="CLU_024003_0_3_6"/>
<dbReference type="Proteomes" id="UP000008148">
    <property type="component" value="Chromosome"/>
</dbReference>
<dbReference type="GO" id="GO:0005829">
    <property type="term" value="C:cytosol"/>
    <property type="evidence" value="ECO:0007669"/>
    <property type="project" value="TreeGrafter"/>
</dbReference>
<dbReference type="GO" id="GO:0005524">
    <property type="term" value="F:ATP binding"/>
    <property type="evidence" value="ECO:0007669"/>
    <property type="project" value="UniProtKB-UniRule"/>
</dbReference>
<dbReference type="GO" id="GO:0003723">
    <property type="term" value="F:RNA binding"/>
    <property type="evidence" value="ECO:0007669"/>
    <property type="project" value="UniProtKB-KW"/>
</dbReference>
<dbReference type="GO" id="GO:0004831">
    <property type="term" value="F:tyrosine-tRNA ligase activity"/>
    <property type="evidence" value="ECO:0007669"/>
    <property type="project" value="UniProtKB-UniRule"/>
</dbReference>
<dbReference type="GO" id="GO:0006437">
    <property type="term" value="P:tyrosyl-tRNA aminoacylation"/>
    <property type="evidence" value="ECO:0007669"/>
    <property type="project" value="UniProtKB-UniRule"/>
</dbReference>
<dbReference type="CDD" id="cd00165">
    <property type="entry name" value="S4"/>
    <property type="match status" value="1"/>
</dbReference>
<dbReference type="CDD" id="cd00805">
    <property type="entry name" value="TyrRS_core"/>
    <property type="match status" value="1"/>
</dbReference>
<dbReference type="FunFam" id="1.10.240.10:FF:000001">
    <property type="entry name" value="Tyrosine--tRNA ligase"/>
    <property type="match status" value="1"/>
</dbReference>
<dbReference type="FunFam" id="3.10.290.10:FF:000007">
    <property type="entry name" value="Tyrosine--tRNA ligase"/>
    <property type="match status" value="1"/>
</dbReference>
<dbReference type="FunFam" id="3.40.50.620:FF:000008">
    <property type="entry name" value="Tyrosine--tRNA ligase"/>
    <property type="match status" value="1"/>
</dbReference>
<dbReference type="Gene3D" id="3.40.50.620">
    <property type="entry name" value="HUPs"/>
    <property type="match status" value="1"/>
</dbReference>
<dbReference type="Gene3D" id="3.10.290.10">
    <property type="entry name" value="RNA-binding S4 domain"/>
    <property type="match status" value="1"/>
</dbReference>
<dbReference type="Gene3D" id="1.10.240.10">
    <property type="entry name" value="Tyrosyl-Transfer RNA Synthetase"/>
    <property type="match status" value="1"/>
</dbReference>
<dbReference type="HAMAP" id="MF_02006">
    <property type="entry name" value="Tyr_tRNA_synth_type1"/>
    <property type="match status" value="1"/>
</dbReference>
<dbReference type="InterPro" id="IPR001412">
    <property type="entry name" value="aa-tRNA-synth_I_CS"/>
</dbReference>
<dbReference type="InterPro" id="IPR002305">
    <property type="entry name" value="aa-tRNA-synth_Ic"/>
</dbReference>
<dbReference type="InterPro" id="IPR014729">
    <property type="entry name" value="Rossmann-like_a/b/a_fold"/>
</dbReference>
<dbReference type="InterPro" id="IPR002942">
    <property type="entry name" value="S4_RNA-bd"/>
</dbReference>
<dbReference type="InterPro" id="IPR036986">
    <property type="entry name" value="S4_RNA-bd_sf"/>
</dbReference>
<dbReference type="InterPro" id="IPR054608">
    <property type="entry name" value="SYY-like_C"/>
</dbReference>
<dbReference type="InterPro" id="IPR002307">
    <property type="entry name" value="Tyr-tRNA-ligase"/>
</dbReference>
<dbReference type="InterPro" id="IPR024088">
    <property type="entry name" value="Tyr-tRNA-ligase_bac-type"/>
</dbReference>
<dbReference type="InterPro" id="IPR024107">
    <property type="entry name" value="Tyr-tRNA-ligase_bac_1"/>
</dbReference>
<dbReference type="NCBIfam" id="TIGR00234">
    <property type="entry name" value="tyrS"/>
    <property type="match status" value="1"/>
</dbReference>
<dbReference type="PANTHER" id="PTHR11766:SF0">
    <property type="entry name" value="TYROSINE--TRNA LIGASE, MITOCHONDRIAL"/>
    <property type="match status" value="1"/>
</dbReference>
<dbReference type="PANTHER" id="PTHR11766">
    <property type="entry name" value="TYROSYL-TRNA SYNTHETASE"/>
    <property type="match status" value="1"/>
</dbReference>
<dbReference type="Pfam" id="PF22421">
    <property type="entry name" value="SYY_C-terminal"/>
    <property type="match status" value="1"/>
</dbReference>
<dbReference type="Pfam" id="PF00579">
    <property type="entry name" value="tRNA-synt_1b"/>
    <property type="match status" value="1"/>
</dbReference>
<dbReference type="PRINTS" id="PR01040">
    <property type="entry name" value="TRNASYNTHTYR"/>
</dbReference>
<dbReference type="SMART" id="SM00363">
    <property type="entry name" value="S4"/>
    <property type="match status" value="1"/>
</dbReference>
<dbReference type="SUPFAM" id="SSF55174">
    <property type="entry name" value="Alpha-L RNA-binding motif"/>
    <property type="match status" value="1"/>
</dbReference>
<dbReference type="SUPFAM" id="SSF52374">
    <property type="entry name" value="Nucleotidylyl transferase"/>
    <property type="match status" value="1"/>
</dbReference>
<dbReference type="PROSITE" id="PS00178">
    <property type="entry name" value="AA_TRNA_LIGASE_I"/>
    <property type="match status" value="1"/>
</dbReference>
<dbReference type="PROSITE" id="PS50889">
    <property type="entry name" value="S4"/>
    <property type="match status" value="1"/>
</dbReference>
<organism>
    <name type="scientific">Citrobacter koseri (strain ATCC BAA-895 / CDC 4225-83 / SGSC4696)</name>
    <dbReference type="NCBI Taxonomy" id="290338"/>
    <lineage>
        <taxon>Bacteria</taxon>
        <taxon>Pseudomonadati</taxon>
        <taxon>Pseudomonadota</taxon>
        <taxon>Gammaproteobacteria</taxon>
        <taxon>Enterobacterales</taxon>
        <taxon>Enterobacteriaceae</taxon>
        <taxon>Citrobacter</taxon>
    </lineage>
</organism>
<proteinExistence type="inferred from homology"/>
<keyword id="KW-0030">Aminoacyl-tRNA synthetase</keyword>
<keyword id="KW-0067">ATP-binding</keyword>
<keyword id="KW-0963">Cytoplasm</keyword>
<keyword id="KW-0436">Ligase</keyword>
<keyword id="KW-0547">Nucleotide-binding</keyword>
<keyword id="KW-0648">Protein biosynthesis</keyword>
<keyword id="KW-1185">Reference proteome</keyword>
<keyword id="KW-0694">RNA-binding</keyword>
<gene>
    <name evidence="1" type="primary">tyrS</name>
    <name type="ordered locus">CKO_01649</name>
</gene>
<accession>A8AH18</accession>
<evidence type="ECO:0000255" key="1">
    <source>
        <dbReference type="HAMAP-Rule" id="MF_02006"/>
    </source>
</evidence>
<reference key="1">
    <citation type="submission" date="2007-08" db="EMBL/GenBank/DDBJ databases">
        <authorList>
            <consortium name="The Citrobacter koseri Genome Sequencing Project"/>
            <person name="McClelland M."/>
            <person name="Sanderson E.K."/>
            <person name="Porwollik S."/>
            <person name="Spieth J."/>
            <person name="Clifton W.S."/>
            <person name="Latreille P."/>
            <person name="Courtney L."/>
            <person name="Wang C."/>
            <person name="Pepin K."/>
            <person name="Bhonagiri V."/>
            <person name="Nash W."/>
            <person name="Johnson M."/>
            <person name="Thiruvilangam P."/>
            <person name="Wilson R."/>
        </authorList>
    </citation>
    <scope>NUCLEOTIDE SEQUENCE [LARGE SCALE GENOMIC DNA]</scope>
    <source>
        <strain>ATCC BAA-895 / CDC 4225-83 / SGSC4696</strain>
    </source>
</reference>
<feature type="chain" id="PRO_1000088582" description="Tyrosine--tRNA ligase">
    <location>
        <begin position="1"/>
        <end position="428"/>
    </location>
</feature>
<feature type="domain" description="S4 RNA-binding" evidence="1">
    <location>
        <begin position="361"/>
        <end position="418"/>
    </location>
</feature>
<feature type="short sequence motif" description="'HIGH' region">
    <location>
        <begin position="46"/>
        <end position="55"/>
    </location>
</feature>
<feature type="short sequence motif" description="'KMSKS' region">
    <location>
        <begin position="239"/>
        <end position="243"/>
    </location>
</feature>
<feature type="binding site" evidence="1">
    <location>
        <position position="41"/>
    </location>
    <ligand>
        <name>L-tyrosine</name>
        <dbReference type="ChEBI" id="CHEBI:58315"/>
    </ligand>
</feature>
<feature type="binding site" evidence="1">
    <location>
        <position position="179"/>
    </location>
    <ligand>
        <name>L-tyrosine</name>
        <dbReference type="ChEBI" id="CHEBI:58315"/>
    </ligand>
</feature>
<feature type="binding site" evidence="1">
    <location>
        <position position="183"/>
    </location>
    <ligand>
        <name>L-tyrosine</name>
        <dbReference type="ChEBI" id="CHEBI:58315"/>
    </ligand>
</feature>
<feature type="binding site" evidence="1">
    <location>
        <position position="242"/>
    </location>
    <ligand>
        <name>ATP</name>
        <dbReference type="ChEBI" id="CHEBI:30616"/>
    </ligand>
</feature>
<name>SYY_CITK8</name>
<comment type="function">
    <text evidence="1">Catalyzes the attachment of tyrosine to tRNA(Tyr) in a two-step reaction: tyrosine is first activated by ATP to form Tyr-AMP and then transferred to the acceptor end of tRNA(Tyr).</text>
</comment>
<comment type="catalytic activity">
    <reaction evidence="1">
        <text>tRNA(Tyr) + L-tyrosine + ATP = L-tyrosyl-tRNA(Tyr) + AMP + diphosphate + H(+)</text>
        <dbReference type="Rhea" id="RHEA:10220"/>
        <dbReference type="Rhea" id="RHEA-COMP:9706"/>
        <dbReference type="Rhea" id="RHEA-COMP:9707"/>
        <dbReference type="ChEBI" id="CHEBI:15378"/>
        <dbReference type="ChEBI" id="CHEBI:30616"/>
        <dbReference type="ChEBI" id="CHEBI:33019"/>
        <dbReference type="ChEBI" id="CHEBI:58315"/>
        <dbReference type="ChEBI" id="CHEBI:78442"/>
        <dbReference type="ChEBI" id="CHEBI:78536"/>
        <dbReference type="ChEBI" id="CHEBI:456215"/>
        <dbReference type="EC" id="6.1.1.1"/>
    </reaction>
</comment>
<comment type="subunit">
    <text evidence="1">Homodimer.</text>
</comment>
<comment type="subcellular location">
    <subcellularLocation>
        <location evidence="1">Cytoplasm</location>
    </subcellularLocation>
</comment>
<comment type="similarity">
    <text evidence="1">Belongs to the class-I aminoacyl-tRNA synthetase family. TyrS type 1 subfamily.</text>
</comment>
<sequence>MEILMASSNLIKQLQERGLVAQVTDEEALAERLAQGPIALYCGFDPTADSLHLGHLVPLLCLKRFQQAGHKPVALVGGATGLIGDPSFKAAERKLNTEDTVQEWVDKIRKQVAPFLDFDCGDNSAIAANNYDWFGGMNVLTFLRDIGKHFSVNQMINKEAVKQRLNRDDQGISFTEFSYNLLQGYDFACLNKLHGVTLQIGGSDQWGNITSGIDLTRRLHQNQVFGLTVPLITKADGTKFGKTEGGAVWLDPKKTSPYKFYQFWINTADADVYRFLKFFTFMDIAEINALEEEDKNSGKAPRAQYVLAEQVTRLVHGEEGLVAAKRITESLFNGNLSDLSEADFEQLAQDGVPMIEMEKGADLMQALVDSELQPSRGQARKTIASNAVTINGEKQSDPEYFFQDSDILFGRYTLLRRGKKNYCLICWK</sequence>
<protein>
    <recommendedName>
        <fullName evidence="1">Tyrosine--tRNA ligase</fullName>
        <ecNumber evidence="1">6.1.1.1</ecNumber>
    </recommendedName>
    <alternativeName>
        <fullName evidence="1">Tyrosyl-tRNA synthetase</fullName>
        <shortName evidence="1">TyrRS</shortName>
    </alternativeName>
</protein>